<name>YIDC_ECOLI</name>
<evidence type="ECO:0000256" key="1">
    <source>
        <dbReference type="SAM" id="MobiDB-lite"/>
    </source>
</evidence>
<evidence type="ECO:0000269" key="2">
    <source>
    </source>
</evidence>
<evidence type="ECO:0000269" key="3">
    <source>
    </source>
</evidence>
<evidence type="ECO:0000269" key="4">
    <source>
    </source>
</evidence>
<evidence type="ECO:0000269" key="5">
    <source>
    </source>
</evidence>
<evidence type="ECO:0000269" key="6">
    <source>
    </source>
</evidence>
<evidence type="ECO:0000269" key="7">
    <source>
    </source>
</evidence>
<evidence type="ECO:0000269" key="8">
    <source>
    </source>
</evidence>
<evidence type="ECO:0000269" key="9">
    <source>
    </source>
</evidence>
<evidence type="ECO:0000269" key="10">
    <source>
    </source>
</evidence>
<evidence type="ECO:0000269" key="11">
    <source>
    </source>
</evidence>
<evidence type="ECO:0000269" key="12">
    <source>
    </source>
</evidence>
<evidence type="ECO:0000269" key="13">
    <source>
    </source>
</evidence>
<evidence type="ECO:0000269" key="14">
    <source>
    </source>
</evidence>
<evidence type="ECO:0000269" key="15">
    <source>
    </source>
</evidence>
<evidence type="ECO:0000269" key="16">
    <source>
    </source>
</evidence>
<evidence type="ECO:0000269" key="17">
    <source>
    </source>
</evidence>
<evidence type="ECO:0000269" key="18">
    <source>
    </source>
</evidence>
<evidence type="ECO:0000305" key="19"/>
<evidence type="ECO:0007744" key="20">
    <source>
        <dbReference type="PDB" id="3BLC"/>
    </source>
</evidence>
<evidence type="ECO:0007744" key="21">
    <source>
        <dbReference type="PDB" id="3BS6"/>
    </source>
</evidence>
<evidence type="ECO:0007829" key="22">
    <source>
        <dbReference type="PDB" id="3BS6"/>
    </source>
</evidence>
<evidence type="ECO:0007829" key="23">
    <source>
        <dbReference type="PDB" id="6AL2"/>
    </source>
</evidence>
<proteinExistence type="evidence at protein level"/>
<organism>
    <name type="scientific">Escherichia coli (strain K12)</name>
    <dbReference type="NCBI Taxonomy" id="83333"/>
    <lineage>
        <taxon>Bacteria</taxon>
        <taxon>Pseudomonadati</taxon>
        <taxon>Pseudomonadota</taxon>
        <taxon>Gammaproteobacteria</taxon>
        <taxon>Enterobacterales</taxon>
        <taxon>Enterobacteriaceae</taxon>
        <taxon>Escherichia</taxon>
    </lineage>
</organism>
<accession>P25714</accession>
<accession>Q2M818</accession>
<feature type="chain" id="PRO_0000124712" description="Membrane protein insertase YidC">
    <location>
        <begin position="1"/>
        <end position="548"/>
    </location>
</feature>
<feature type="topological domain" description="Cytoplasmic" evidence="19">
    <location>
        <begin position="1"/>
        <end position="5"/>
    </location>
</feature>
<feature type="transmembrane region" description="Helical" evidence="19">
    <location>
        <begin position="6"/>
        <end position="23"/>
    </location>
</feature>
<feature type="topological domain" description="Periplasmic">
    <location>
        <begin position="24"/>
        <end position="342"/>
    </location>
</feature>
<feature type="transmembrane region" description="Helical" evidence="19">
    <location>
        <begin position="343"/>
        <end position="370"/>
    </location>
</feature>
<feature type="topological domain" description="Cytoplasmic">
    <location>
        <begin position="371"/>
        <end position="416"/>
    </location>
</feature>
<feature type="transmembrane region" description="Helical" evidence="19">
    <location>
        <begin position="417"/>
        <end position="446"/>
    </location>
</feature>
<feature type="topological domain" description="Periplasmic">
    <location>
        <begin position="447"/>
        <end position="463"/>
    </location>
</feature>
<feature type="transmembrane region" description="Helical" evidence="19">
    <location>
        <begin position="464"/>
        <end position="481"/>
    </location>
</feature>
<feature type="topological domain" description="Cytoplasmic">
    <location>
        <begin position="482"/>
        <end position="493"/>
    </location>
</feature>
<feature type="transmembrane region" description="Helical" evidence="19">
    <location>
        <begin position="494"/>
        <end position="509"/>
    </location>
</feature>
<feature type="topological domain" description="Periplasmic">
    <location>
        <begin position="510"/>
        <end position="512"/>
    </location>
</feature>
<feature type="transmembrane region" description="Helical" evidence="19">
    <location>
        <begin position="513"/>
        <end position="535"/>
    </location>
</feature>
<feature type="topological domain" description="Cytoplasmic">
    <location>
        <begin position="536"/>
        <end position="548"/>
    </location>
</feature>
<feature type="region of interest" description="Can be removed without causing lethality, dispensible for M13 procoat processing">
    <location>
        <begin position="24"/>
        <end position="264"/>
    </location>
</feature>
<feature type="region of interest" description="Disordered" evidence="1">
    <location>
        <begin position="28"/>
        <end position="55"/>
    </location>
</feature>
<feature type="region of interest" description="Interaction with SecF; not required for insertion of a number of Sec-dependent or Sec-independent substrates">
    <location>
        <begin position="215"/>
        <end position="265"/>
    </location>
</feature>
<feature type="region of interest" description="Required for Sec-dependent and Sec-independent protein insertion">
    <location>
        <begin position="265"/>
        <end position="346"/>
    </location>
</feature>
<feature type="region of interest" description="Can be removed without causing lethality, dispensible for M13 procoat processing">
    <location>
        <begin position="527"/>
        <end position="548"/>
    </location>
</feature>
<feature type="compositionally biased region" description="Low complexity" evidence="1">
    <location>
        <begin position="30"/>
        <end position="50"/>
    </location>
</feature>
<feature type="mutagenesis site" description="Cold-sensitive at 30 degrees Celsius; when associated with 334-W--G-338. Protein accumulates stably.">
    <original>EQDK</original>
    <variation>IEGR</variation>
    <location>
        <begin position="24"/>
        <end position="27"/>
    </location>
</feature>
<feature type="mutagenesis site" description="Cold-sensitive at 30 degrees Celsius; when associated with 24-I--R-27. Protein accumulates stably." evidence="7">
    <original>WFISQ</original>
    <variation>LEVLFQG</variation>
    <location>
        <begin position="334"/>
        <end position="338"/>
    </location>
</feature>
<feature type="mutagenesis site" description="Loss of function." evidence="10">
    <original>I</original>
    <variation>S</variation>
    <location>
        <position position="361"/>
    </location>
</feature>
<feature type="mutagenesis site" description="Loss of function." evidence="10">
    <original>L</original>
    <variation>S</variation>
    <location>
        <position position="436"/>
    </location>
</feature>
<feature type="mutagenesis site" description="Temperature-sensitive at 42 degrees Celsius; when associated with 512-ENLYFQG. Protein is not stable." evidence="7">
    <original>PTTVT</original>
    <variation>LVPRGS</variation>
    <location>
        <begin position="483"/>
        <end position="487"/>
    </location>
</feature>
<feature type="mutagenesis site" description="Temperature-sensitive at 42 degrees Celsius; when associated with 483-L--S-487. Protein is not stable." evidence="7">
    <original>G</original>
    <variation>ENLYFQG</variation>
    <location>
        <position position="512"/>
    </location>
</feature>
<feature type="strand" evidence="22">
    <location>
        <begin position="60"/>
        <end position="64"/>
    </location>
</feature>
<feature type="strand" evidence="22">
    <location>
        <begin position="69"/>
        <end position="73"/>
    </location>
</feature>
<feature type="strand" evidence="22">
    <location>
        <begin position="78"/>
        <end position="90"/>
    </location>
</feature>
<feature type="strand" evidence="22">
    <location>
        <begin position="95"/>
        <end position="103"/>
    </location>
</feature>
<feature type="strand" evidence="22">
    <location>
        <begin position="106"/>
        <end position="116"/>
    </location>
</feature>
<feature type="helix" evidence="22">
    <location>
        <begin position="123"/>
        <end position="125"/>
    </location>
</feature>
<feature type="strand" evidence="22">
    <location>
        <begin position="136"/>
        <end position="139"/>
    </location>
</feature>
<feature type="strand" evidence="22">
    <location>
        <begin position="145"/>
        <end position="154"/>
    </location>
</feature>
<feature type="strand" evidence="22">
    <location>
        <begin position="160"/>
        <end position="168"/>
    </location>
</feature>
<feature type="strand" evidence="22">
    <location>
        <begin position="173"/>
        <end position="181"/>
    </location>
</feature>
<feature type="strand" evidence="22">
    <location>
        <begin position="184"/>
        <end position="186"/>
    </location>
</feature>
<feature type="strand" evidence="22">
    <location>
        <begin position="188"/>
        <end position="201"/>
    </location>
</feature>
<feature type="helix" evidence="23">
    <location>
        <begin position="204"/>
        <end position="206"/>
    </location>
</feature>
<feature type="strand" evidence="23">
    <location>
        <begin position="212"/>
        <end position="215"/>
    </location>
</feature>
<feature type="strand" evidence="22">
    <location>
        <begin position="220"/>
        <end position="224"/>
    </location>
</feature>
<feature type="turn" evidence="22">
    <location>
        <begin position="226"/>
        <end position="228"/>
    </location>
</feature>
<feature type="strand" evidence="22">
    <location>
        <begin position="231"/>
        <end position="233"/>
    </location>
</feature>
<feature type="helix" evidence="22">
    <location>
        <begin position="235"/>
        <end position="239"/>
    </location>
</feature>
<feature type="strand" evidence="22">
    <location>
        <begin position="245"/>
        <end position="250"/>
    </location>
</feature>
<feature type="strand" evidence="22">
    <location>
        <begin position="252"/>
        <end position="257"/>
    </location>
</feature>
<feature type="strand" evidence="22">
    <location>
        <begin position="260"/>
        <end position="280"/>
    </location>
</feature>
<feature type="strand" evidence="22">
    <location>
        <begin position="283"/>
        <end position="289"/>
    </location>
</feature>
<feature type="strand" evidence="22">
    <location>
        <begin position="293"/>
        <end position="295"/>
    </location>
</feature>
<feature type="strand" evidence="22">
    <location>
        <begin position="300"/>
        <end position="311"/>
    </location>
</feature>
<feature type="helix" evidence="22">
    <location>
        <begin position="314"/>
        <end position="320"/>
    </location>
</feature>
<feature type="helix" evidence="22">
    <location>
        <begin position="324"/>
        <end position="327"/>
    </location>
</feature>
<feature type="helix" evidence="23">
    <location>
        <begin position="331"/>
        <end position="333"/>
    </location>
</feature>
<feature type="helix" evidence="23">
    <location>
        <begin position="334"/>
        <end position="351"/>
    </location>
</feature>
<feature type="helix" evidence="23">
    <location>
        <begin position="354"/>
        <end position="368"/>
    </location>
</feature>
<feature type="helix" evidence="23">
    <location>
        <begin position="370"/>
        <end position="385"/>
    </location>
</feature>
<feature type="helix" evidence="23">
    <location>
        <begin position="387"/>
        <end position="397"/>
    </location>
</feature>
<feature type="helix" evidence="23">
    <location>
        <begin position="401"/>
        <end position="414"/>
    </location>
</feature>
<feature type="helix" evidence="23">
    <location>
        <begin position="421"/>
        <end position="423"/>
    </location>
</feature>
<feature type="helix" evidence="23">
    <location>
        <begin position="424"/>
        <end position="442"/>
    </location>
</feature>
<feature type="helix" evidence="23">
    <location>
        <begin position="444"/>
        <end position="446"/>
    </location>
</feature>
<feature type="helix" evidence="23">
    <location>
        <begin position="466"/>
        <end position="481"/>
    </location>
</feature>
<feature type="helix" evidence="23">
    <location>
        <begin position="489"/>
        <end position="506"/>
    </location>
</feature>
<feature type="helix" evidence="23">
    <location>
        <begin position="511"/>
        <end position="531"/>
    </location>
</feature>
<sequence>MDSQRNLLVIALLFVSFMIWQAWEQDKNPQPQAQQTTQTTTTAAGSAADQGVPASGQGKLISVKTDVLDLTINTRGGDVEQALLPAYPKELNSTQPFQLLETSPQFIYQAQSGLTGRDGPDNPANGPRPLYNVEKDAYVLAEGQNELQVPMTYTDAAGNTFTKTFVLKRGDYAVNVNYNVQNAGEKPLEISSFGQLKQSITLPPHLDTGSSNFALHTFRGAAYSTPDEKYEKYKFDTIADNENLNISSKGGWVAMLQQYFATAWIPHNDGTNNFYTANLGNGIAAIGYKSQPVLVQPGQTGAMNSTLWVGPEIQDKMAAVAPHLDLTVDYGWLWFISQPLFKLLKWIHSFVGNWGFSIIIITFIVRGIMYPLTKAQYTSMAKMRMLQPKIQAMRERLGDDKQRISQEMMALYKAEKVNPLGGCFPLLIQMPIFLALYYMLMGSVELRQAPFALWIHDLSAQDPYYILPILMGVTMFFIQKMSPTTVTDPMQQKIMTFMPVIFTVFFLWFPSGLVLYYIVSNLVTIIQQQLIYRGLEKRGLHSREKKKS</sequence>
<reference key="1">
    <citation type="journal article" date="1993" name="Genomics">
        <title>DNA sequence and analysis of 136 kilobases of the Escherichia coli genome: organizational symmetry around the origin of replication.</title>
        <authorList>
            <person name="Burland V.D."/>
            <person name="Plunkett G. III"/>
            <person name="Daniels D.L."/>
            <person name="Blattner F.R."/>
        </authorList>
    </citation>
    <scope>NUCLEOTIDE SEQUENCE [LARGE SCALE GENOMIC DNA]</scope>
    <source>
        <strain>K12 / MG1655 / ATCC 47076</strain>
    </source>
</reference>
<reference key="2">
    <citation type="journal article" date="1997" name="Science">
        <title>The complete genome sequence of Escherichia coli K-12.</title>
        <authorList>
            <person name="Blattner F.R."/>
            <person name="Plunkett G. III"/>
            <person name="Bloch C.A."/>
            <person name="Perna N.T."/>
            <person name="Burland V."/>
            <person name="Riley M."/>
            <person name="Collado-Vides J."/>
            <person name="Glasner J.D."/>
            <person name="Rode C.K."/>
            <person name="Mayhew G.F."/>
            <person name="Gregor J."/>
            <person name="Davis N.W."/>
            <person name="Kirkpatrick H.A."/>
            <person name="Goeden M.A."/>
            <person name="Rose D.J."/>
            <person name="Mau B."/>
            <person name="Shao Y."/>
        </authorList>
    </citation>
    <scope>NUCLEOTIDE SEQUENCE [LARGE SCALE GENOMIC DNA]</scope>
    <source>
        <strain>K12 / MG1655 / ATCC 47076</strain>
    </source>
</reference>
<reference key="3">
    <citation type="journal article" date="2006" name="Mol. Syst. Biol.">
        <title>Highly accurate genome sequences of Escherichia coli K-12 strains MG1655 and W3110.</title>
        <authorList>
            <person name="Hayashi K."/>
            <person name="Morooka N."/>
            <person name="Yamamoto Y."/>
            <person name="Fujita K."/>
            <person name="Isono K."/>
            <person name="Choi S."/>
            <person name="Ohtsubo E."/>
            <person name="Baba T."/>
            <person name="Wanner B.L."/>
            <person name="Mori H."/>
            <person name="Horiuchi T."/>
        </authorList>
    </citation>
    <scope>NUCLEOTIDE SEQUENCE [LARGE SCALE GENOMIC DNA]</scope>
    <source>
        <strain>K12 / W3110 / ATCC 27325 / DSM 5911</strain>
    </source>
</reference>
<reference key="4">
    <citation type="journal article" date="1985" name="Gene">
        <title>Physical mapping and nucleotide sequence of the rnpA gene that encodes the protein component of ribonuclease P in Escherichia coli.</title>
        <authorList>
            <person name="Hansen F.G."/>
            <person name="Hansen E.B."/>
            <person name="Atlung T."/>
        </authorList>
    </citation>
    <scope>NUCLEOTIDE SEQUENCE [GENOMIC DNA] OF 1-3</scope>
    <source>
        <strain>K12</strain>
    </source>
</reference>
<reference key="5">
    <citation type="journal article" date="1998" name="J. Biol. Chem.">
        <title>Membrane topology of the 60-kDa Oxa1p homologue from Escherichia coli.</title>
        <authorList>
            <person name="Saaf A."/>
            <person name="Monne M."/>
            <person name="de Gier J.W."/>
            <person name="von Heijne G."/>
        </authorList>
    </citation>
    <scope>TOPOLOGY</scope>
    <source>
        <strain>K12/ MC1061 / TOP10F'</strain>
    </source>
</reference>
<reference key="6">
    <citation type="journal article" date="2000" name="EMBO J.">
        <title>YidC, the Escherichia coli homologue of mitochondrial Oxa1p, is a component of the Sec translocase.</title>
        <authorList>
            <person name="Scotti P.A."/>
            <person name="Urbanus M.L."/>
            <person name="Brunner J."/>
            <person name="de Gier J.-W."/>
            <person name="von Heijne G."/>
            <person name="van der Does C."/>
            <person name="Driessen A.J.M."/>
            <person name="Oudega B."/>
            <person name="Luirink J."/>
        </authorList>
    </citation>
    <scope>FUNCTION IN SEC-DEPENDENT PATHWAY</scope>
    <scope>INTERACTION WITH TRANSMEMBRANE SEGMENTS</scope>
</reference>
<reference key="7">
    <citation type="journal article" date="2000" name="Nature">
        <title>YidC mediates membrane protein insertion in bacteria.</title>
        <authorList>
            <person name="Samuelson J.C."/>
            <person name="Chen M."/>
            <person name="Jiang F."/>
            <person name="Moeller I."/>
            <person name="Wiedmann M."/>
            <person name="Kuhn A."/>
            <person name="Phillips G.J."/>
            <person name="Dalbey R.E."/>
        </authorList>
    </citation>
    <scope>FUNCTION IN SEC-INDEPENDENT PATHWAY</scope>
    <scope>SUBSTRATES</scope>
    <scope>DISRUPTION PHENOTYPE</scope>
</reference>
<reference key="8">
    <citation type="journal article" date="2001" name="EMBO Rep.">
        <title>Sec-dependent membrane protein insertion: sequential interaction of nascent FtsQ with SecY and YidC.</title>
        <authorList>
            <person name="Urbanus M.L."/>
            <person name="Scotti P.A."/>
            <person name="Froderberg L."/>
            <person name="Saaf A."/>
            <person name="de Gier J.W."/>
            <person name="Brunner J."/>
            <person name="Samuelson J.C."/>
            <person name="Dalbey R.E."/>
            <person name="Oudega B."/>
            <person name="Luirink J."/>
        </authorList>
    </citation>
    <scope>INTERACTION WITH FTSQ AFTER SECY</scope>
    <scope>DISRUPTION PHENOTYPE</scope>
</reference>
<reference key="9">
    <citation type="journal article" date="2002" name="J. Biol. Chem.">
        <title>Targeting, insertion, and localization of Escherichia coli YidC.</title>
        <authorList>
            <person name="Urbanus M.L."/>
            <person name="Froederberg L."/>
            <person name="Drew D."/>
            <person name="Bjoerk P."/>
            <person name="de Gier J.-W."/>
            <person name="Brunner J."/>
            <person name="Oudega B."/>
            <person name="Luirink J."/>
        </authorList>
    </citation>
    <scope>SRP- AND SEC-DEPENDENT INSERTION INTO MEMBRANES</scope>
    <scope>SUBCELLULAR LOCATION</scope>
    <scope>TOPOLOGY</scope>
    <source>
        <strain>K12 / MC4100 / ATCC 35695 / DSM 6574</strain>
    </source>
</reference>
<reference key="10">
    <citation type="journal article" date="2002" name="Mol. Microbiol.">
        <title>SecDFyajC forms a heterotetrameric complex with YidC.</title>
        <authorList>
            <person name="Nouwen N."/>
            <person name="Driessen A.J.M."/>
        </authorList>
    </citation>
    <scope>INTERACTION WITH SECD AND SECF</scope>
</reference>
<reference key="11">
    <citation type="journal article" date="2003" name="Proc. Natl. Acad. Sci. U.S.A.">
        <title>A conserved function of YidC in the biogenesis of respiratory chain complexes.</title>
        <authorList>
            <person name="Van Der Laan M."/>
            <person name="Urbanus M.L."/>
            <person name="Ten Hagen-Jongman C.M."/>
            <person name="Nouwen N."/>
            <person name="Oudega B."/>
            <person name="Harms N."/>
            <person name="Driessen A.J.M."/>
            <person name="Luirink J."/>
        </authorList>
    </citation>
    <scope>FUNCTION</scope>
</reference>
<reference key="12">
    <citation type="journal article" date="2003" name="J. Biol. Chem.">
        <title>Conditional lethal mutations separate the M13 procoat and Pf3 coat functions of YidC: different YidC structural requirements for membrane protein insertion.</title>
        <authorList>
            <person name="Chen M."/>
            <person name="Xie K."/>
            <person name="Nouwen N."/>
            <person name="Driessen A.J."/>
            <person name="Dalbey R.E."/>
        </authorList>
    </citation>
    <scope>MUTAGENESIS OF 23-TRP--LYS-27; 334-TRP--GLN-338; 483-PRO--THR-487 AND GLY-512</scope>
</reference>
<reference key="13">
    <citation type="journal article" date="2003" name="J. Biol. Chem.">
        <title>Defining the regions of Escherichia coli YidC that contribute to activity.</title>
        <authorList>
            <person name="Jiang F."/>
            <person name="Chen M."/>
            <person name="Yi L."/>
            <person name="de Gier J.-W.L."/>
            <person name="Kuhn A."/>
            <person name="Dalbey R.E."/>
        </authorList>
    </citation>
    <scope>MUTAGENESIS OF ILE-361 AND LEU-436</scope>
</reference>
<reference key="14">
    <citation type="journal article" date="2003" name="Biochemistry">
        <title>YidC is strictly required for membrane insertion of subunits a and c of the F(1)F(0)ATP synthase and SecE of the SecYEG translocase.</title>
        <authorList>
            <person name="Yi L."/>
            <person name="Jiang F."/>
            <person name="Chen M."/>
            <person name="Cain B."/>
            <person name="Bolhuis A."/>
            <person name="Dalbey R.E."/>
        </authorList>
    </citation>
    <scope>FUNCTION</scope>
    <scope>ATP SYNTHASE SUBUNIT AND SECE AS SUBSTRATES</scope>
</reference>
<reference key="15">
    <citation type="journal article" date="2004" name="J. Biol. Chem.">
        <title>Targeting and translocation of two lipoproteins in Escherichia coli via the SRP/Sec/YidC pathway.</title>
        <authorList>
            <person name="Froderberg L."/>
            <person name="Houben E.N."/>
            <person name="Baars L."/>
            <person name="Luirink J."/>
            <person name="de Gier J.W."/>
        </authorList>
    </citation>
    <scope>FUNCTION IN TARGETING AND/OR TRANSLOCATION OF LIPOPROTEINS</scope>
</reference>
<reference key="16">
    <citation type="journal article" date="2004" name="J. Cell Biol.">
        <title>Role of YidC in folding of polytopic membrane proteins.</title>
        <authorList>
            <person name="Nagamori S."/>
            <person name="Smirnova I.N."/>
            <person name="Kaback H.R."/>
        </authorList>
    </citation>
    <scope>FUNCTION IN FOLDING BUT NOT INSERTION OF LACY</scope>
    <scope>DISRUPTION PHENOTYPE</scope>
</reference>
<reference key="17">
    <citation type="journal article" date="2005" name="J. Biol. Chem.">
        <title>Protein complexes of the Escherichia coli cell envelope.</title>
        <authorList>
            <person name="Stenberg F."/>
            <person name="Chovanec P."/>
            <person name="Maslen S.L."/>
            <person name="Robinson C.V."/>
            <person name="Ilag L."/>
            <person name="von Heijne G."/>
            <person name="Daley D.O."/>
        </authorList>
    </citation>
    <scope>SUBUNIT</scope>
    <scope>SUBCELLULAR LOCATION</scope>
    <source>
        <strain>BL21-DE3</strain>
    </source>
</reference>
<reference key="18">
    <citation type="journal article" date="2006" name="Biochemistry">
        <title>Different regions of the nonconserved large periplasmic domain of Escherichia coli YidC are involved in the SecF interaction and membrane insertase activity.</title>
        <authorList>
            <person name="Xie K."/>
            <person name="Kiefer D."/>
            <person name="Nagler G."/>
            <person name="Dalbey R.E."/>
            <person name="Kuhn A."/>
        </authorList>
    </citation>
    <scope>FUNCTION OF PERIPLASMIC DOMAIN</scope>
</reference>
<reference key="19">
    <citation type="journal article" date="2008" name="FEBS Lett.">
        <title>Detection of cross-links between FtsH, YidC, HflK/C suggests a linked role for these proteins in quality control upon insertion of bacterial inner membrane proteins.</title>
        <authorList>
            <person name="van Bloois E."/>
            <person name="Dekker H.L."/>
            <person name="Froderberg L."/>
            <person name="Houben E.N."/>
            <person name="Urbanus M.L."/>
            <person name="de Koster C.G."/>
            <person name="de Gier J.W."/>
            <person name="Luirink J."/>
        </authorList>
    </citation>
    <scope>INTERACTION WITH FTSH</scope>
</reference>
<reference key="20">
    <citation type="journal article" date="2008" name="J. Bacteriol.">
        <title>Functional overlap but lack of complete cross-complementation of Streptococcus mutans and Escherichia coli YidC orthologs.</title>
        <authorList>
            <person name="Dong Y."/>
            <person name="Palmer S.R."/>
            <person name="Hasona A."/>
            <person name="Nagamori S."/>
            <person name="Kaback H.R."/>
            <person name="Dalbey R.E."/>
            <person name="Brady L.J."/>
        </authorList>
    </citation>
    <scope>COMPLEMENTATION BY AND IN STREPTOCOCCUS MUTANS</scope>
</reference>
<reference key="21">
    <citation type="journal article" date="2008" name="J. Biol. Chem.">
        <title>Biogenesis of MalF and the MalFGK(2) maltose transport complex in Escherichia coli requires YidC.</title>
        <authorList>
            <person name="Wagner S."/>
            <person name="Pop O.I."/>
            <person name="Haan G.J."/>
            <person name="Baars L."/>
            <person name="Koningstein G."/>
            <person name="Klepsch M.M."/>
            <person name="Genevaux P."/>
            <person name="Luirink J."/>
            <person name="de Gier J.W."/>
        </authorList>
    </citation>
    <scope>FUNCTION IN FOLDING BUT NOT INSERTION OF MALF OR OF MALFGK(2) COMPLEX</scope>
</reference>
<reference key="22">
    <citation type="journal article" date="2009" name="J. Bacteriol.">
        <title>Bacillus subtilis SpoIIIJ and YqjG function in membrane protein biogenesis.</title>
        <authorList>
            <person name="Saller M.J."/>
            <person name="Fusetti F."/>
            <person name="Driessen A.J."/>
        </authorList>
    </citation>
    <scope>COMPLEMENTATION BY SPOIIIJ AND YQJG OF B.SUBTILIS</scope>
</reference>
<reference key="23">
    <citation type="journal article" date="2011" name="J. Biol. Chem.">
        <title>Membrane localization of small proteins in Escherichia coli.</title>
        <authorList>
            <person name="Fontaine F."/>
            <person name="Fuchs R.T."/>
            <person name="Storz G."/>
        </authorList>
    </citation>
    <scope>DISRUPTION PHENOTYPE</scope>
    <source>
        <strain>K12 / MG1655 / ATCC 47076</strain>
    </source>
</reference>
<reference key="24">
    <citation type="journal article" date="2016" name="Biochem. J.">
        <title>Membrane protein insertion and assembly by the bacterial holo-translocon SecYEG-SecDF-YajC-YidC.</title>
        <authorList>
            <person name="Komar J."/>
            <person name="Alvira S."/>
            <person name="Schulze R.J."/>
            <person name="Martin R."/>
            <person name="Lycklama a Nijeholt J.A."/>
            <person name="Lee S.C."/>
            <person name="Dafforn T.R."/>
            <person name="Deckers-Hebestreit G."/>
            <person name="Berger I."/>
            <person name="Schaffitzel C."/>
            <person name="Collinson I."/>
        </authorList>
    </citation>
    <scope>FUNCTION</scope>
    <scope>SUBUNIT</scope>
    <scope>SUBCELLULAR LOCATION</scope>
    <source>
        <strain>BL21-DE3</strain>
    </source>
</reference>
<reference evidence="20" key="25">
    <citation type="journal article" date="2008" name="J. Biol. Chem.">
        <title>Crystal structure of the major periplasmic domain of the bacterial membrane protein assembly facilitator YidC.</title>
        <authorList>
            <person name="Oliver D.C."/>
            <person name="Paetzel M."/>
        </authorList>
    </citation>
    <scope>X-RAY CRYSTALLOGRAPHY (2.5 ANGSTROMS) OF 26-340</scope>
    <source>
        <strain>K12</strain>
    </source>
</reference>
<reference evidence="21" key="26">
    <citation type="journal article" date="2008" name="J. Biol. Chem.">
        <title>The crystal structure of the periplasmic domain of the Escherichia coli membrane protein insertase YidC contains a substrate binding cleft.</title>
        <authorList>
            <person name="Ravaud S."/>
            <person name="Stjepanovic G."/>
            <person name="Wild K."/>
            <person name="Sinning I."/>
        </authorList>
    </citation>
    <scope>X-RAY CRYSTALLOGRAPHY (1.8 ANGSTROMS) OF 56-329</scope>
</reference>
<reference key="27">
    <citation type="journal article" date="2011" name="Annu. Rev. Biochem.">
        <title>Assembly of bacterial inner membrane proteins.</title>
        <authorList>
            <person name="Dalbey R.E."/>
            <person name="Wang P."/>
            <person name="Kuhn A."/>
        </authorList>
    </citation>
    <scope>REVIEW</scope>
</reference>
<comment type="function">
    <text evidence="2 3 8 9 11 12 14 16">Inner membrane protein required for the insertion and/or proper folding and/or complex formation of integral inner membrane proteins. Involved in integration of membrane proteins that insert dependently and independently of the Sec translocase complex, as well as at least 2 lipoproteins. Its own insertion requires SRP and is Sec translocase-dependent. Essential for the integration of Sec-dependent subunit a of the F(0)ATP synthase, FtsQ and SecE proteins and for Sec-independent subunit c of the F(0)ATP synthase, M13 phage procoat and the N-terminus of leader peptidase Lep. Probably interacts directly with Sec-independent substrates. Sec-dependent protein FtsQ interacts first with SecY then subsequently with YidC. Sec-dependent LacY and MalF require YidC to acquire tertiary structure and stability, a chaperone-like function, but not for membrane insertion. Stable maltose transport copmplex formation (MalFGK(2)) also requires YidC. Partially complements a Streptococcus mutans yidC2 disruption mutant.</text>
</comment>
<comment type="subunit">
    <text evidence="2 4 6 13 15 18">Interacts with SecD and SecF. Component of the SecDF-YajC complex, a heterotetrameric translocase complex. The SecDF-YidC-YajC translocase forms a supercomplex with SecYEG, called the holo-translocon (HTL) (PubMed:27435098). The stoichiometry of the super complex may be SecYEG:YidC:SecDF 4:3:1, YajC is in the reconstituted complex (with SecDF) but as no antibody is available it could not be quantified (PubMed:27435098). Specifically interacts with transmembrane segments of nascent integral membrane proteins during membrane integration. Found in 3 different complexes in inner membrane preparations (PubMed:16079137). Can be cross-linked to FtsH, in the larger FtsH/HflKC complex.</text>
</comment>
<comment type="interaction">
    <interactant intactId="EBI-6400779">
        <id>P25714</id>
    </interactant>
    <interactant intactId="EBI-8482910">
        <id>P03623</id>
        <label>VIII</label>
    </interactant>
    <organismsDiffer>true</organismsDiffer>
    <experiments>5</experiments>
</comment>
<comment type="subcellular location">
    <subcellularLocation>
        <location evidence="5 13">Cell inner membrane</location>
        <topology evidence="5 13">Multi-pass membrane protein</topology>
    </subcellularLocation>
    <text>Predominantly localized at cell poles at all stages of cell growth.</text>
</comment>
<comment type="induction">
    <text>At mid-exponential phase in strain MC4100 there are about 2500 copies per cell (at protein level).</text>
</comment>
<comment type="domain">
    <text>Most of the large periplasmic domain (residues 24-264) is not required for either Sec-dependent or Sec-independent protein insertion. However, residues 265-346, the C-terminal part of the large periplasmic domain, are required for both Sec-dependent and Sec-independent protein insertion.</text>
</comment>
<comment type="disruption phenotype">
    <text evidence="3 4 11 17">Lethality. Upon depletion experiments insertion of Sec translocase-independent integral membrane proteins ceases. Translocation of Sec-dependent protein decreases to a lesser extent. Also leads to decreased targeting and/or translocation of Lpp and BRP lipoproteins. Both spoIIIJ and yqjG of B.subtilis functionally complement yidC depletion, whereas Streptococcus mutans yidC1 and yidC2 only partially complement depletion.</text>
</comment>
<comment type="similarity">
    <text evidence="19">Belongs to the OXA1/ALB3/YidC family. Type 1 subfamily.</text>
</comment>
<protein>
    <recommendedName>
        <fullName>Membrane protein insertase YidC</fullName>
    </recommendedName>
    <alternativeName>
        <fullName>Foldase YidC</fullName>
    </alternativeName>
    <alternativeName>
        <fullName>Inner membrane protein YidC</fullName>
    </alternativeName>
    <alternativeName>
        <fullName>Membrane integrase YidC</fullName>
    </alternativeName>
    <alternativeName>
        <fullName>Oxa1Ec</fullName>
    </alternativeName>
</protein>
<gene>
    <name type="primary">yidC</name>
    <name type="ordered locus">b3705</name>
    <name type="ordered locus">JW3683</name>
</gene>
<dbReference type="EMBL" id="L10328">
    <property type="protein sequence ID" value="AAA62056.1"/>
    <property type="molecule type" value="Genomic_DNA"/>
</dbReference>
<dbReference type="EMBL" id="U00096">
    <property type="protein sequence ID" value="AAC76728.1"/>
    <property type="molecule type" value="Genomic_DNA"/>
</dbReference>
<dbReference type="EMBL" id="AP009048">
    <property type="protein sequence ID" value="BAE77588.1"/>
    <property type="molecule type" value="Genomic_DNA"/>
</dbReference>
<dbReference type="EMBL" id="M11056">
    <property type="status" value="NOT_ANNOTATED_CDS"/>
    <property type="molecule type" value="Genomic_DNA"/>
</dbReference>
<dbReference type="PIR" id="B65173">
    <property type="entry name" value="B65173"/>
</dbReference>
<dbReference type="RefSeq" id="NP_418161.1">
    <property type="nucleotide sequence ID" value="NC_000913.3"/>
</dbReference>
<dbReference type="RefSeq" id="WP_000378250.1">
    <property type="nucleotide sequence ID" value="NZ_SSZK01000035.1"/>
</dbReference>
<dbReference type="PDB" id="3BLC">
    <property type="method" value="X-ray"/>
    <property type="resolution" value="2.50 A"/>
    <property type="chains" value="A/B=26-340"/>
</dbReference>
<dbReference type="PDB" id="3BS6">
    <property type="method" value="X-ray"/>
    <property type="resolution" value="1.80 A"/>
    <property type="chains" value="A/B=56-329"/>
</dbReference>
<dbReference type="PDB" id="4UTQ">
    <property type="method" value="EM"/>
    <property type="resolution" value="8.00 A"/>
    <property type="chains" value="A=1-548"/>
</dbReference>
<dbReference type="PDB" id="5M5H">
    <property type="method" value="EM"/>
    <property type="resolution" value="4.50 A"/>
    <property type="chains" value="A=1-540"/>
</dbReference>
<dbReference type="PDB" id="5MG3">
    <property type="method" value="EM"/>
    <property type="resolution" value="14.00 A"/>
    <property type="chains" value="C=2-548"/>
</dbReference>
<dbReference type="PDB" id="6AL2">
    <property type="method" value="X-ray"/>
    <property type="resolution" value="2.80 A"/>
    <property type="chains" value="A/B=1-540"/>
</dbReference>
<dbReference type="PDBsum" id="3BLC"/>
<dbReference type="PDBsum" id="3BS6"/>
<dbReference type="PDBsum" id="4UTQ"/>
<dbReference type="PDBsum" id="5M5H"/>
<dbReference type="PDBsum" id="5MG3"/>
<dbReference type="PDBsum" id="6AL2"/>
<dbReference type="EMDB" id="EMD-2705"/>
<dbReference type="EMDB" id="EMD-3506"/>
<dbReference type="SMR" id="P25714"/>
<dbReference type="BioGRID" id="4261511">
    <property type="interactions" value="290"/>
</dbReference>
<dbReference type="ComplexPortal" id="CPX-1095">
    <property type="entry name" value="Holo-translocon SecYEG-SecDF-YajC-YidC complex"/>
</dbReference>
<dbReference type="DIP" id="DIP-12442N"/>
<dbReference type="FunCoup" id="P25714">
    <property type="interactions" value="431"/>
</dbReference>
<dbReference type="IntAct" id="P25714">
    <property type="interactions" value="31"/>
</dbReference>
<dbReference type="MINT" id="P25714"/>
<dbReference type="STRING" id="511145.b3705"/>
<dbReference type="TCDB" id="2.A.9.3.1">
    <property type="family name" value="the membrane protein insertase (yidc/alb3/oxa1) family"/>
</dbReference>
<dbReference type="jPOST" id="P25714"/>
<dbReference type="PaxDb" id="511145-b3705"/>
<dbReference type="DNASU" id="948214"/>
<dbReference type="EnsemblBacteria" id="AAC76728">
    <property type="protein sequence ID" value="AAC76728"/>
    <property type="gene ID" value="b3705"/>
</dbReference>
<dbReference type="GeneID" id="75173922"/>
<dbReference type="GeneID" id="948214"/>
<dbReference type="KEGG" id="ecj:JW3683"/>
<dbReference type="KEGG" id="eco:b3705"/>
<dbReference type="KEGG" id="ecoc:C3026_20090"/>
<dbReference type="PATRIC" id="fig|1411691.4.peg.2998"/>
<dbReference type="EchoBASE" id="EB1183"/>
<dbReference type="eggNOG" id="COG0706">
    <property type="taxonomic scope" value="Bacteria"/>
</dbReference>
<dbReference type="HOGENOM" id="CLU_016535_3_0_6"/>
<dbReference type="InParanoid" id="P25714"/>
<dbReference type="OMA" id="YAEFGWV"/>
<dbReference type="OrthoDB" id="9780552at2"/>
<dbReference type="PhylomeDB" id="P25714"/>
<dbReference type="BioCyc" id="EcoCyc:YIDC"/>
<dbReference type="BioCyc" id="MetaCyc:YIDC"/>
<dbReference type="EvolutionaryTrace" id="P25714"/>
<dbReference type="PRO" id="PR:P25714"/>
<dbReference type="Proteomes" id="UP000000625">
    <property type="component" value="Chromosome"/>
</dbReference>
<dbReference type="GO" id="GO:0031522">
    <property type="term" value="C:cell envelope Sec protein transport complex"/>
    <property type="evidence" value="ECO:0000314"/>
    <property type="project" value="EcoCyc"/>
</dbReference>
<dbReference type="GO" id="GO:0016020">
    <property type="term" value="C:membrane"/>
    <property type="evidence" value="ECO:0000314"/>
    <property type="project" value="UniProtKB"/>
</dbReference>
<dbReference type="GO" id="GO:0005886">
    <property type="term" value="C:plasma membrane"/>
    <property type="evidence" value="ECO:0000314"/>
    <property type="project" value="UniProtKB"/>
</dbReference>
<dbReference type="GO" id="GO:0032977">
    <property type="term" value="F:membrane insertase activity"/>
    <property type="evidence" value="ECO:0000314"/>
    <property type="project" value="EcoCyc"/>
</dbReference>
<dbReference type="GO" id="GO:0006457">
    <property type="term" value="P:protein folding"/>
    <property type="evidence" value="ECO:0000315"/>
    <property type="project" value="UniProtKB"/>
</dbReference>
<dbReference type="GO" id="GO:0051205">
    <property type="term" value="P:protein insertion into membrane"/>
    <property type="evidence" value="ECO:0000314"/>
    <property type="project" value="EcoliWiki"/>
</dbReference>
<dbReference type="GO" id="GO:0032978">
    <property type="term" value="P:protein insertion into membrane from inner side"/>
    <property type="evidence" value="ECO:0000314"/>
    <property type="project" value="ComplexPortal"/>
</dbReference>
<dbReference type="GO" id="GO:0043952">
    <property type="term" value="P:protein transport by the Sec complex"/>
    <property type="evidence" value="ECO:0000314"/>
    <property type="project" value="ComplexPortal"/>
</dbReference>
<dbReference type="GO" id="GO:0065003">
    <property type="term" value="P:protein-containing complex assembly"/>
    <property type="evidence" value="ECO:0000315"/>
    <property type="project" value="UniProtKB"/>
</dbReference>
<dbReference type="CDD" id="cd20070">
    <property type="entry name" value="5TM_YidC_Alb3"/>
    <property type="match status" value="1"/>
</dbReference>
<dbReference type="CDD" id="cd19961">
    <property type="entry name" value="EcYidC-like_peri"/>
    <property type="match status" value="1"/>
</dbReference>
<dbReference type="FunFam" id="2.70.98.90:FF:000001">
    <property type="entry name" value="Membrane protein insertase YidC"/>
    <property type="match status" value="1"/>
</dbReference>
<dbReference type="Gene3D" id="2.70.98.90">
    <property type="match status" value="1"/>
</dbReference>
<dbReference type="HAMAP" id="MF_01810">
    <property type="entry name" value="YidC_type1"/>
    <property type="match status" value="1"/>
</dbReference>
<dbReference type="InterPro" id="IPR019998">
    <property type="entry name" value="Membr_insert_YidC"/>
</dbReference>
<dbReference type="InterPro" id="IPR028053">
    <property type="entry name" value="Membr_insert_YidC_N"/>
</dbReference>
<dbReference type="InterPro" id="IPR001708">
    <property type="entry name" value="YidC/ALB3/OXA1/COX18"/>
</dbReference>
<dbReference type="InterPro" id="IPR028055">
    <property type="entry name" value="YidC/Oxa/ALB_C"/>
</dbReference>
<dbReference type="InterPro" id="IPR047196">
    <property type="entry name" value="YidC_ALB_C"/>
</dbReference>
<dbReference type="InterPro" id="IPR038221">
    <property type="entry name" value="YidC_periplasmic_sf"/>
</dbReference>
<dbReference type="NCBIfam" id="NF002351">
    <property type="entry name" value="PRK01318.1-1"/>
    <property type="match status" value="1"/>
</dbReference>
<dbReference type="NCBIfam" id="NF002352">
    <property type="entry name" value="PRK01318.1-3"/>
    <property type="match status" value="1"/>
</dbReference>
<dbReference type="NCBIfam" id="NF002353">
    <property type="entry name" value="PRK01318.1-4"/>
    <property type="match status" value="1"/>
</dbReference>
<dbReference type="NCBIfam" id="TIGR03593">
    <property type="entry name" value="yidC_nterm"/>
    <property type="match status" value="1"/>
</dbReference>
<dbReference type="NCBIfam" id="TIGR03592">
    <property type="entry name" value="yidC_oxa1_cterm"/>
    <property type="match status" value="1"/>
</dbReference>
<dbReference type="PANTHER" id="PTHR12428:SF65">
    <property type="entry name" value="CYTOCHROME C OXIDASE ASSEMBLY PROTEIN COX18, MITOCHONDRIAL"/>
    <property type="match status" value="1"/>
</dbReference>
<dbReference type="PANTHER" id="PTHR12428">
    <property type="entry name" value="OXA1"/>
    <property type="match status" value="1"/>
</dbReference>
<dbReference type="Pfam" id="PF02096">
    <property type="entry name" value="60KD_IMP"/>
    <property type="match status" value="1"/>
</dbReference>
<dbReference type="Pfam" id="PF14849">
    <property type="entry name" value="YidC_periplas"/>
    <property type="match status" value="1"/>
</dbReference>
<dbReference type="PRINTS" id="PR00701">
    <property type="entry name" value="60KDINNERMP"/>
</dbReference>
<dbReference type="PRINTS" id="PR01900">
    <property type="entry name" value="YIDCPROTEIN"/>
</dbReference>
<keyword id="KW-0002">3D-structure</keyword>
<keyword id="KW-0997">Cell inner membrane</keyword>
<keyword id="KW-1003">Cell membrane</keyword>
<keyword id="KW-0143">Chaperone</keyword>
<keyword id="KW-0472">Membrane</keyword>
<keyword id="KW-0653">Protein transport</keyword>
<keyword id="KW-1185">Reference proteome</keyword>
<keyword id="KW-0811">Translocation</keyword>
<keyword id="KW-0812">Transmembrane</keyword>
<keyword id="KW-1133">Transmembrane helix</keyword>
<keyword id="KW-0813">Transport</keyword>